<protein>
    <recommendedName>
        <fullName evidence="5">Variable large protein 18</fullName>
    </recommendedName>
</protein>
<keyword id="KW-0998">Cell outer membrane</keyword>
<keyword id="KW-0449">Lipoprotein</keyword>
<keyword id="KW-0472">Membrane</keyword>
<keyword id="KW-0564">Palmitate</keyword>
<keyword id="KW-0614">Plasmid</keyword>
<keyword id="KW-0732">Signal</keyword>
<feature type="signal peptide" evidence="3">
    <location>
        <begin position="1"/>
        <end position="26"/>
    </location>
</feature>
<feature type="chain" id="PRO_0000244506" description="Variable large protein 18" evidence="2">
    <location>
        <begin position="27"/>
        <end position="360"/>
    </location>
</feature>
<feature type="lipid moiety-binding region" description="N-palmitoyl cysteine" evidence="2 7">
    <location>
        <position position="27"/>
    </location>
</feature>
<feature type="lipid moiety-binding region" description="S-diacylglycerol cysteine" evidence="2 7">
    <location>
        <position position="27"/>
    </location>
</feature>
<gene>
    <name evidence="5" type="primary">vlp18</name>
    <name evidence="6" type="synonym">vmp18</name>
</gene>
<sequence length="360" mass="36906">MRKRISAIINKLNISIMMMIVVLMIGCGQQAVEAGKDGARAATGGRSLSEVLMEVGKSAENAFYSFMALVSDTLGLRVTKDTKKNEVGGYFNSLGGKLGKASDELEEVAKKSEVEGAKDGPIAVAIRAAVDTAKTTLSTLKGHLESLKGIGDDKVVGWAENDQQGIKPADDGLNKFLNALQSIVKAATDAGVLAPKAGNTTLTVNGVDNKDGAKVLAIDKPGAAVGEKASLIVSAVSGEEILASIVASKEGDQALGAAADGTTTAMSFAKGGTKDNLSNANTPKAAAVAGGIALRSLVKDGKLASHNDNSEKAVQAAGVIAANKLLVSVEDLIKKTVKNVLEKAKEKIDKARAPKATGQQ</sequence>
<evidence type="ECO:0000250" key="1">
    <source>
        <dbReference type="UniProtKB" id="P21875"/>
    </source>
</evidence>
<evidence type="ECO:0000255" key="2"/>
<evidence type="ECO:0000255" key="3">
    <source>
        <dbReference type="PROSITE-ProRule" id="PRU00303"/>
    </source>
</evidence>
<evidence type="ECO:0000269" key="4">
    <source>
    </source>
</evidence>
<evidence type="ECO:0000303" key="5">
    <source>
    </source>
</evidence>
<evidence type="ECO:0000303" key="6">
    <source ref="1"/>
</evidence>
<evidence type="ECO:0000305" key="7"/>
<evidence type="ECO:0000305" key="8">
    <source>
    </source>
</evidence>
<evidence type="ECO:0000312" key="9">
    <source>
        <dbReference type="EMBL" id="AAB17739.1"/>
    </source>
</evidence>
<proteinExistence type="inferred from homology"/>
<geneLocation type="plasmid" evidence="4"/>
<name>VLP18_BORHE</name>
<organism>
    <name type="scientific">Borrelia hermsii</name>
    <dbReference type="NCBI Taxonomy" id="140"/>
    <lineage>
        <taxon>Bacteria</taxon>
        <taxon>Pseudomonadati</taxon>
        <taxon>Spirochaetota</taxon>
        <taxon>Spirochaetia</taxon>
        <taxon>Spirochaetales</taxon>
        <taxon>Borreliaceae</taxon>
        <taxon>Borrelia</taxon>
    </lineage>
</organism>
<dbReference type="EMBL" id="U52149">
    <property type="protein sequence ID" value="AAB17739.1"/>
    <property type="molecule type" value="Genomic_DNA"/>
</dbReference>
<dbReference type="SMR" id="P70906"/>
<dbReference type="GO" id="GO:0009279">
    <property type="term" value="C:cell outer membrane"/>
    <property type="evidence" value="ECO:0007669"/>
    <property type="project" value="UniProtKB-SubCell"/>
</dbReference>
<dbReference type="InterPro" id="IPR000680">
    <property type="entry name" value="Borrelia_lipo"/>
</dbReference>
<dbReference type="Pfam" id="PF00921">
    <property type="entry name" value="Lipoprotein_2"/>
    <property type="match status" value="1"/>
</dbReference>
<dbReference type="SUPFAM" id="SSF74748">
    <property type="entry name" value="Variable surface antigen VlsE"/>
    <property type="match status" value="1"/>
</dbReference>
<dbReference type="PROSITE" id="PS51257">
    <property type="entry name" value="PROKAR_LIPOPROTEIN"/>
    <property type="match status" value="1"/>
</dbReference>
<comment type="function">
    <text evidence="1">The Vlp and Vsp proteins are antigenically distinct proteins, only one vlp or vsp gene is transcriptionally active at any one time. Switching between these genes is a mechanism of host immune response evasion.</text>
</comment>
<comment type="subcellular location">
    <subcellularLocation>
        <location evidence="1">Cell outer membrane</location>
        <topology>Lipid-anchor</topology>
    </subcellularLocation>
</comment>
<comment type="miscellaneous">
    <text evidence="8">Genes for both Vlp and Vsp families are on (usually) unnamed linear plasmids in B.hermsii HS1.</text>
</comment>
<comment type="similarity">
    <text evidence="4">Belongs to the variable large protein (Vlp) family. Alpha subfamily.</text>
</comment>
<accession>P70906</accession>
<reference evidence="9" key="1">
    <citation type="submission" date="1996-03" db="EMBL/GenBank/DDBJ databases">
        <authorList>
            <person name="Restrepo B.I."/>
            <person name="Carter C.J."/>
            <person name="Infante D."/>
            <person name="Barbour A.G."/>
        </authorList>
    </citation>
    <scope>NUCLEOTIDE SEQUENCE [GENOMIC DNA]</scope>
    <source>
        <strain>ATCC 35209 / HS1</strain>
    </source>
</reference>
<reference evidence="7" key="2">
    <citation type="journal article" date="1998" name="Infect. Immun.">
        <title>Population structure of the relapsing fever spirochete Borrelia hermsii as indicated by polymorphism of two multigene families that encode immunogenic outer surface lipoproteins.</title>
        <authorList>
            <person name="Hinnebusch B.J."/>
            <person name="Barbour A.G."/>
            <person name="Restrepo B.I."/>
            <person name="Schwan T.G."/>
        </authorList>
    </citation>
    <scope>NOMENCLATURE</scope>
</reference>